<comment type="function">
    <text evidence="1">One of the early assembly proteins it binds 23S rRNA. One of the proteins that surrounds the polypeptide exit tunnel on the outside of the ribosome. Forms the main docking site for trigger factor binding to the ribosome.</text>
</comment>
<comment type="subunit">
    <text evidence="1">Part of the 50S ribosomal subunit. Contacts protein L29, and trigger factor when it is bound to the ribosome.</text>
</comment>
<comment type="similarity">
    <text evidence="1">Belongs to the universal ribosomal protein uL23 family.</text>
</comment>
<feature type="chain" id="PRO_1000068184" description="Large ribosomal subunit protein uL23">
    <location>
        <begin position="1"/>
        <end position="100"/>
    </location>
</feature>
<protein>
    <recommendedName>
        <fullName evidence="1">Large ribosomal subunit protein uL23</fullName>
    </recommendedName>
    <alternativeName>
        <fullName evidence="2">50S ribosomal protein L23</fullName>
    </alternativeName>
</protein>
<proteinExistence type="inferred from homology"/>
<organism>
    <name type="scientific">Vibrio campbellii (strain ATCC BAA-1116)</name>
    <dbReference type="NCBI Taxonomy" id="2902295"/>
    <lineage>
        <taxon>Bacteria</taxon>
        <taxon>Pseudomonadati</taxon>
        <taxon>Pseudomonadota</taxon>
        <taxon>Gammaproteobacteria</taxon>
        <taxon>Vibrionales</taxon>
        <taxon>Vibrionaceae</taxon>
        <taxon>Vibrio</taxon>
    </lineage>
</organism>
<evidence type="ECO:0000255" key="1">
    <source>
        <dbReference type="HAMAP-Rule" id="MF_01369"/>
    </source>
</evidence>
<evidence type="ECO:0000305" key="2"/>
<keyword id="KW-0687">Ribonucleoprotein</keyword>
<keyword id="KW-0689">Ribosomal protein</keyword>
<keyword id="KW-0694">RNA-binding</keyword>
<keyword id="KW-0699">rRNA-binding</keyword>
<accession>A7MWI5</accession>
<gene>
    <name evidence="1" type="primary">rplW</name>
    <name type="ordered locus">VIBHAR_00732</name>
</gene>
<dbReference type="EMBL" id="CP000789">
    <property type="protein sequence ID" value="ABU69733.1"/>
    <property type="molecule type" value="Genomic_DNA"/>
</dbReference>
<dbReference type="RefSeq" id="WP_004398471.1">
    <property type="nucleotide sequence ID" value="NC_022269.1"/>
</dbReference>
<dbReference type="SMR" id="A7MWI5"/>
<dbReference type="GeneID" id="97539800"/>
<dbReference type="KEGG" id="vha:VIBHAR_00732"/>
<dbReference type="PATRIC" id="fig|338187.25.peg.1882"/>
<dbReference type="Proteomes" id="UP000008152">
    <property type="component" value="Chromosome I"/>
</dbReference>
<dbReference type="GO" id="GO:1990904">
    <property type="term" value="C:ribonucleoprotein complex"/>
    <property type="evidence" value="ECO:0007669"/>
    <property type="project" value="UniProtKB-KW"/>
</dbReference>
<dbReference type="GO" id="GO:0005840">
    <property type="term" value="C:ribosome"/>
    <property type="evidence" value="ECO:0007669"/>
    <property type="project" value="UniProtKB-KW"/>
</dbReference>
<dbReference type="GO" id="GO:0019843">
    <property type="term" value="F:rRNA binding"/>
    <property type="evidence" value="ECO:0007669"/>
    <property type="project" value="UniProtKB-UniRule"/>
</dbReference>
<dbReference type="GO" id="GO:0003735">
    <property type="term" value="F:structural constituent of ribosome"/>
    <property type="evidence" value="ECO:0007669"/>
    <property type="project" value="InterPro"/>
</dbReference>
<dbReference type="GO" id="GO:0006412">
    <property type="term" value="P:translation"/>
    <property type="evidence" value="ECO:0007669"/>
    <property type="project" value="UniProtKB-UniRule"/>
</dbReference>
<dbReference type="FunFam" id="3.30.70.330:FF:000001">
    <property type="entry name" value="50S ribosomal protein L23"/>
    <property type="match status" value="1"/>
</dbReference>
<dbReference type="Gene3D" id="3.30.70.330">
    <property type="match status" value="1"/>
</dbReference>
<dbReference type="HAMAP" id="MF_01369_B">
    <property type="entry name" value="Ribosomal_uL23_B"/>
    <property type="match status" value="1"/>
</dbReference>
<dbReference type="InterPro" id="IPR012677">
    <property type="entry name" value="Nucleotide-bd_a/b_plait_sf"/>
</dbReference>
<dbReference type="InterPro" id="IPR013025">
    <property type="entry name" value="Ribosomal_uL23-like"/>
</dbReference>
<dbReference type="InterPro" id="IPR012678">
    <property type="entry name" value="Ribosomal_uL23/eL15/eS24_sf"/>
</dbReference>
<dbReference type="InterPro" id="IPR001014">
    <property type="entry name" value="Ribosomal_uL23_CS"/>
</dbReference>
<dbReference type="NCBIfam" id="NF004358">
    <property type="entry name" value="PRK05738.1-1"/>
    <property type="match status" value="1"/>
</dbReference>
<dbReference type="NCBIfam" id="NF004359">
    <property type="entry name" value="PRK05738.1-3"/>
    <property type="match status" value="1"/>
</dbReference>
<dbReference type="NCBIfam" id="NF004360">
    <property type="entry name" value="PRK05738.1-5"/>
    <property type="match status" value="1"/>
</dbReference>
<dbReference type="NCBIfam" id="NF004363">
    <property type="entry name" value="PRK05738.2-4"/>
    <property type="match status" value="1"/>
</dbReference>
<dbReference type="PANTHER" id="PTHR11620">
    <property type="entry name" value="60S RIBOSOMAL PROTEIN L23A"/>
    <property type="match status" value="1"/>
</dbReference>
<dbReference type="Pfam" id="PF00276">
    <property type="entry name" value="Ribosomal_L23"/>
    <property type="match status" value="1"/>
</dbReference>
<dbReference type="SUPFAM" id="SSF54189">
    <property type="entry name" value="Ribosomal proteins S24e, L23 and L15e"/>
    <property type="match status" value="1"/>
</dbReference>
<dbReference type="PROSITE" id="PS00050">
    <property type="entry name" value="RIBOSOMAL_L23"/>
    <property type="match status" value="1"/>
</dbReference>
<reference key="1">
    <citation type="submission" date="2007-08" db="EMBL/GenBank/DDBJ databases">
        <authorList>
            <consortium name="The Vibrio harveyi Genome Sequencing Project"/>
            <person name="Bassler B."/>
            <person name="Clifton S.W."/>
            <person name="Fulton L."/>
            <person name="Delehaunty K."/>
            <person name="Fronick C."/>
            <person name="Harrison M."/>
            <person name="Markivic C."/>
            <person name="Fulton R."/>
            <person name="Tin-Wollam A.-M."/>
            <person name="Shah N."/>
            <person name="Pepin K."/>
            <person name="Nash W."/>
            <person name="Thiruvilangam P."/>
            <person name="Bhonagiri V."/>
            <person name="Waters C."/>
            <person name="Tu K.C."/>
            <person name="Irgon J."/>
            <person name="Wilson R.K."/>
        </authorList>
    </citation>
    <scope>NUCLEOTIDE SEQUENCE [LARGE SCALE GENOMIC DNA]</scope>
    <source>
        <strain>ATCC BAA-1116 / BB120</strain>
    </source>
</reference>
<name>RL23_VIBC1</name>
<sequence length="100" mass="11128">MITEERILKVLRAPHISEKATMAAEKANTIVFKVAKDATKKEIKAAVEKLFEVEVKSVNTLITKGKTKRQGLRQGRRSDVKKAYVTLKEGQDLDFVGGAE</sequence>